<reference key="1">
    <citation type="journal article" date="1990" name="J. Biol. Chem.">
        <title>Primary structure of a linker subunit of the tube worm 3000-kDa hemoglobin.</title>
        <authorList>
            <person name="Suzuki T."/>
            <person name="Takagi T."/>
            <person name="Ohta S."/>
        </authorList>
    </citation>
    <scope>PROTEIN SEQUENCE</scope>
</reference>
<reference key="2">
    <citation type="journal article" date="1988" name="Biochem. J.">
        <title>N-terminal amino acid sequence of the deep-sea tube worm haemoglobin remarkably resembles that of annelid haemoglobin.</title>
        <authorList>
            <person name="Suzuki T."/>
            <person name="Takagi T."/>
            <person name="Ohta S."/>
        </authorList>
    </citation>
    <scope>PROTEIN SEQUENCE OF 1-41</scope>
</reference>
<comment type="function">
    <text>Acts as a linker for the assembly of heme-containing chains in the construction of giant hemoglobin.</text>
</comment>
<comment type="subunit">
    <text>Giant hemoglobin is composed of four heme-containing chains (AI to AIV), and two linker chains (AV and AVI).</text>
</comment>
<proteinExistence type="evidence at protein level"/>
<feature type="chain" id="PRO_0000087500" description="Giant hemoglobin linker AV-1 chain">
    <location>
        <begin position="1"/>
        <end position="224"/>
    </location>
</feature>
<feature type="domain" description="LDL-receptor class A" evidence="1">
    <location>
        <begin position="62"/>
        <end position="103"/>
    </location>
</feature>
<feature type="glycosylation site" description="N-linked (GlcNAc...) asparagine" evidence="2">
    <location>
        <position position="108"/>
    </location>
</feature>
<feature type="disulfide bond" evidence="1">
    <location>
        <begin position="64"/>
        <end position="77"/>
    </location>
</feature>
<feature type="disulfide bond" evidence="1">
    <location>
        <begin position="71"/>
        <end position="90"/>
    </location>
</feature>
<feature type="disulfide bond" evidence="1">
    <location>
        <begin position="84"/>
        <end position="101"/>
    </location>
</feature>
<accession>P16222</accession>
<sequence>AAVQPLSVSDAMGARVDAQAWRVDRLTKQFQAISDAADTSIGAAKSGGDIARHMLNSHLDDHWCPSKYHRCGNSPQCMSNMAFCDGVNDCKNHFDEDENRCVVPVTANSTWIGYPAYDHCTQRRPYEMVISITSAPSDIVYKVHQPLKVQVDLFSKKGGLKQSASLHGDAVYCKGSQRLIVAPPEDDRLEIIGQFDGVSNDRFKGYIVREMSGDKCAEFRFFKQ</sequence>
<organism>
    <name type="scientific">Lamellibrachia sp.</name>
    <name type="common">Deep-sea giant tube worm</name>
    <dbReference type="NCBI Taxonomy" id="6424"/>
    <lineage>
        <taxon>Eukaryota</taxon>
        <taxon>Metazoa</taxon>
        <taxon>Spiralia</taxon>
        <taxon>Lophotrochozoa</taxon>
        <taxon>Annelida</taxon>
        <taxon>Polychaeta</taxon>
        <taxon>Sedentaria</taxon>
        <taxon>Canalipalpata</taxon>
        <taxon>Sabellida</taxon>
        <taxon>Siboglinidae</taxon>
        <taxon>Lamellibrachia</taxon>
    </lineage>
</organism>
<protein>
    <recommendedName>
        <fullName>Giant hemoglobin linker AV-1 chain</fullName>
    </recommendedName>
</protein>
<dbReference type="PIR" id="A35012">
    <property type="entry name" value="A35012"/>
</dbReference>
<dbReference type="SMR" id="P16222"/>
<dbReference type="GO" id="GO:0005344">
    <property type="term" value="F:oxygen carrier activity"/>
    <property type="evidence" value="ECO:0007669"/>
    <property type="project" value="UniProtKB-KW"/>
</dbReference>
<dbReference type="CDD" id="cd11673">
    <property type="entry name" value="hemoglobin_linker_C"/>
    <property type="match status" value="1"/>
</dbReference>
<dbReference type="CDD" id="cd00112">
    <property type="entry name" value="LDLa"/>
    <property type="match status" value="1"/>
</dbReference>
<dbReference type="Gene3D" id="2.40.128.620">
    <property type="match status" value="1"/>
</dbReference>
<dbReference type="InterPro" id="IPR031639">
    <property type="entry name" value="Eryth_link_C"/>
</dbReference>
<dbReference type="InterPro" id="IPR036153">
    <property type="entry name" value="Eryth_link_C_sf"/>
</dbReference>
<dbReference type="InterPro" id="IPR036055">
    <property type="entry name" value="LDL_receptor-like_sf"/>
</dbReference>
<dbReference type="InterPro" id="IPR023415">
    <property type="entry name" value="LDLR_class-A_CS"/>
</dbReference>
<dbReference type="InterPro" id="IPR002172">
    <property type="entry name" value="LDrepeatLR_classA_rpt"/>
</dbReference>
<dbReference type="Pfam" id="PF16915">
    <property type="entry name" value="Eryth_link_C"/>
    <property type="match status" value="1"/>
</dbReference>
<dbReference type="SMART" id="SM00192">
    <property type="entry name" value="LDLa"/>
    <property type="match status" value="1"/>
</dbReference>
<dbReference type="SUPFAM" id="SSF141480">
    <property type="entry name" value="Extracellular hemoglobin linker subunit, receptor domain"/>
    <property type="match status" value="1"/>
</dbReference>
<dbReference type="SUPFAM" id="SSF57424">
    <property type="entry name" value="LDL receptor-like module"/>
    <property type="match status" value="1"/>
</dbReference>
<dbReference type="PROSITE" id="PS01209">
    <property type="entry name" value="LDLRA_1"/>
    <property type="match status" value="1"/>
</dbReference>
<dbReference type="PROSITE" id="PS50068">
    <property type="entry name" value="LDLRA_2"/>
    <property type="match status" value="1"/>
</dbReference>
<evidence type="ECO:0000255" key="1">
    <source>
        <dbReference type="PROSITE-ProRule" id="PRU00124"/>
    </source>
</evidence>
<evidence type="ECO:0000305" key="2"/>
<keyword id="KW-0903">Direct protein sequencing</keyword>
<keyword id="KW-1015">Disulfide bond</keyword>
<keyword id="KW-0325">Glycoprotein</keyword>
<keyword id="KW-0561">Oxygen transport</keyword>
<keyword id="KW-0813">Transport</keyword>
<name>GLBL_LAMSP</name>